<organism>
    <name type="scientific">Pseudomonas aeruginosa (strain UCBPP-PA14)</name>
    <dbReference type="NCBI Taxonomy" id="208963"/>
    <lineage>
        <taxon>Bacteria</taxon>
        <taxon>Pseudomonadati</taxon>
        <taxon>Pseudomonadota</taxon>
        <taxon>Gammaproteobacteria</taxon>
        <taxon>Pseudomonadales</taxon>
        <taxon>Pseudomonadaceae</taxon>
        <taxon>Pseudomonas</taxon>
    </lineage>
</organism>
<feature type="chain" id="PRO_1000080590" description="Na(+)-translocating NADH-quinone reductase subunit F">
    <location>
        <begin position="1"/>
        <end position="407"/>
    </location>
</feature>
<feature type="transmembrane region" description="Helical" evidence="1">
    <location>
        <begin position="6"/>
        <end position="26"/>
    </location>
</feature>
<feature type="domain" description="2Fe-2S ferredoxin-type" evidence="1">
    <location>
        <begin position="35"/>
        <end position="127"/>
    </location>
</feature>
<feature type="domain" description="FAD-binding FR-type" evidence="1">
    <location>
        <begin position="130"/>
        <end position="269"/>
    </location>
</feature>
<feature type="binding site" evidence="1">
    <location>
        <position position="70"/>
    </location>
    <ligand>
        <name>[2Fe-2S] cluster</name>
        <dbReference type="ChEBI" id="CHEBI:190135"/>
    </ligand>
</feature>
<feature type="binding site" evidence="1">
    <location>
        <position position="76"/>
    </location>
    <ligand>
        <name>[2Fe-2S] cluster</name>
        <dbReference type="ChEBI" id="CHEBI:190135"/>
    </ligand>
</feature>
<feature type="binding site" evidence="1">
    <location>
        <position position="79"/>
    </location>
    <ligand>
        <name>[2Fe-2S] cluster</name>
        <dbReference type="ChEBI" id="CHEBI:190135"/>
    </ligand>
</feature>
<feature type="binding site" evidence="1">
    <location>
        <position position="111"/>
    </location>
    <ligand>
        <name>[2Fe-2S] cluster</name>
        <dbReference type="ChEBI" id="CHEBI:190135"/>
    </ligand>
</feature>
<feature type="strand" evidence="2">
    <location>
        <begin position="131"/>
        <end position="139"/>
    </location>
</feature>
<feature type="strand" evidence="2">
    <location>
        <begin position="142"/>
        <end position="144"/>
    </location>
</feature>
<feature type="strand" evidence="2">
    <location>
        <begin position="147"/>
        <end position="153"/>
    </location>
</feature>
<feature type="helix" evidence="2">
    <location>
        <begin position="155"/>
        <end position="157"/>
    </location>
</feature>
<feature type="strand" evidence="2">
    <location>
        <begin position="167"/>
        <end position="172"/>
    </location>
</feature>
<feature type="strand" evidence="2">
    <location>
        <begin position="174"/>
        <end position="178"/>
    </location>
</feature>
<feature type="helix" evidence="2">
    <location>
        <begin position="179"/>
        <end position="181"/>
    </location>
</feature>
<feature type="helix" evidence="2">
    <location>
        <begin position="186"/>
        <end position="188"/>
    </location>
</feature>
<feature type="helix" evidence="2">
    <location>
        <begin position="189"/>
        <end position="194"/>
    </location>
</feature>
<feature type="helix" evidence="2">
    <location>
        <begin position="197"/>
        <end position="199"/>
    </location>
</feature>
<feature type="strand" evidence="2">
    <location>
        <begin position="201"/>
        <end position="204"/>
    </location>
</feature>
<feature type="strand" evidence="2">
    <location>
        <begin position="208"/>
        <end position="213"/>
    </location>
</feature>
<feature type="strand" evidence="2">
    <location>
        <begin position="223"/>
        <end position="229"/>
    </location>
</feature>
<feature type="helix" evidence="2">
    <location>
        <begin position="243"/>
        <end position="249"/>
    </location>
</feature>
<feature type="strand" evidence="2">
    <location>
        <begin position="256"/>
        <end position="263"/>
    </location>
</feature>
<feature type="strand" evidence="2">
    <location>
        <begin position="270"/>
        <end position="273"/>
    </location>
</feature>
<feature type="strand" evidence="2">
    <location>
        <begin position="275"/>
        <end position="280"/>
    </location>
</feature>
<feature type="helix" evidence="2">
    <location>
        <begin position="281"/>
        <end position="283"/>
    </location>
</feature>
<feature type="helix" evidence="2">
    <location>
        <begin position="284"/>
        <end position="296"/>
    </location>
</feature>
<feature type="strand" evidence="2">
    <location>
        <begin position="304"/>
        <end position="312"/>
    </location>
</feature>
<feature type="helix" evidence="2">
    <location>
        <begin position="313"/>
        <end position="315"/>
    </location>
</feature>
<feature type="helix" evidence="2">
    <location>
        <begin position="319"/>
        <end position="328"/>
    </location>
</feature>
<feature type="strand" evidence="2">
    <location>
        <begin position="332"/>
        <end position="340"/>
    </location>
</feature>
<feature type="helix" evidence="2">
    <location>
        <begin position="343"/>
        <end position="345"/>
    </location>
</feature>
<feature type="strand" evidence="2">
    <location>
        <begin position="349"/>
        <end position="352"/>
    </location>
</feature>
<feature type="helix" evidence="2">
    <location>
        <begin position="354"/>
        <end position="361"/>
    </location>
</feature>
<feature type="helix" evidence="2">
    <location>
        <begin position="363"/>
        <end position="365"/>
    </location>
</feature>
<feature type="helix" evidence="2">
    <location>
        <begin position="369"/>
        <end position="371"/>
    </location>
</feature>
<feature type="strand" evidence="2">
    <location>
        <begin position="372"/>
        <end position="377"/>
    </location>
</feature>
<feature type="helix" evidence="2">
    <location>
        <begin position="380"/>
        <end position="392"/>
    </location>
</feature>
<feature type="helix" evidence="2">
    <location>
        <begin position="397"/>
        <end position="399"/>
    </location>
</feature>
<feature type="strand" evidence="2">
    <location>
        <begin position="400"/>
        <end position="402"/>
    </location>
</feature>
<gene>
    <name evidence="1" type="primary">nqrF</name>
    <name type="ordered locus">PA14_25350</name>
</gene>
<keyword id="KW-0001">2Fe-2S</keyword>
<keyword id="KW-0002">3D-structure</keyword>
<keyword id="KW-0997">Cell inner membrane</keyword>
<keyword id="KW-1003">Cell membrane</keyword>
<keyword id="KW-0274">FAD</keyword>
<keyword id="KW-0285">Flavoprotein</keyword>
<keyword id="KW-0406">Ion transport</keyword>
<keyword id="KW-0408">Iron</keyword>
<keyword id="KW-0411">Iron-sulfur</keyword>
<keyword id="KW-0472">Membrane</keyword>
<keyword id="KW-0479">Metal-binding</keyword>
<keyword id="KW-0520">NAD</keyword>
<keyword id="KW-0915">Sodium</keyword>
<keyword id="KW-0739">Sodium transport</keyword>
<keyword id="KW-1278">Translocase</keyword>
<keyword id="KW-0812">Transmembrane</keyword>
<keyword id="KW-1133">Transmembrane helix</keyword>
<keyword id="KW-0813">Transport</keyword>
<keyword id="KW-0830">Ubiquinone</keyword>
<proteinExistence type="evidence at protein level"/>
<protein>
    <recommendedName>
        <fullName evidence="1">Na(+)-translocating NADH-quinone reductase subunit F</fullName>
        <shortName evidence="1">Na(+)-NQR subunit F</shortName>
        <shortName evidence="1">Na(+)-translocating NQR subunit F</shortName>
        <ecNumber evidence="1">7.2.1.1</ecNumber>
    </recommendedName>
    <alternativeName>
        <fullName evidence="1">NQR complex subunit F</fullName>
    </alternativeName>
    <alternativeName>
        <fullName evidence="1">NQR-1 subunit F</fullName>
    </alternativeName>
</protein>
<sequence>MIGFEIFLAIGMFTAIVLGLVAIILVARAKLVSSGDVTIQINGEHSLTVPAGGKLLQTLATNNVFLSSACGGGGTCAQCKCVVVEGGGEMLPTEESHFTRRQAKEGWRLSCQTPVKQDMQIRVPEEVFGVKKWECTVESNPNVATFIKELTLRLPDGESVDFRAGGYVQLECPPHVVEYKDFDIQPEYRGDWDKFNMWRYVSKVDETVIRAYSMANYPEEQGVVKFNIRIASPPPGSDLPPGQMSSWVFNLKPGDKVTVYGPFGEFFAKDTEAEMVFIGGGAGMAPMRSHIFDQLRRLKSNRKISFWYGARSLREAFYTEEYDQLQAENPNFQWHLALSDPQPEDNWTGLTGFIHNVLFENYLKDHPAPEDCEFYMCGPPMMNAAVIKMLTDLGVERENILLDDFGG</sequence>
<dbReference type="EC" id="7.2.1.1" evidence="1"/>
<dbReference type="EMBL" id="CP000438">
    <property type="protein sequence ID" value="ABJ12233.1"/>
    <property type="molecule type" value="Genomic_DNA"/>
</dbReference>
<dbReference type="RefSeq" id="WP_003091181.1">
    <property type="nucleotide sequence ID" value="NZ_CP034244.1"/>
</dbReference>
<dbReference type="PDB" id="7QU3">
    <property type="method" value="X-ray"/>
    <property type="resolution" value="1.60 A"/>
    <property type="chains" value="A=130-407"/>
</dbReference>
<dbReference type="PDB" id="7QU5">
    <property type="method" value="X-ray"/>
    <property type="resolution" value="1.25 A"/>
    <property type="chains" value="A=130-407"/>
</dbReference>
<dbReference type="PDBsum" id="7QU3"/>
<dbReference type="PDBsum" id="7QU5"/>
<dbReference type="SMR" id="Q02PF8"/>
<dbReference type="KEGG" id="pau:PA14_25350"/>
<dbReference type="PseudoCAP" id="PA14_25350"/>
<dbReference type="HOGENOM" id="CLU_003827_7_2_6"/>
<dbReference type="Proteomes" id="UP000000653">
    <property type="component" value="Chromosome"/>
</dbReference>
<dbReference type="GO" id="GO:0005886">
    <property type="term" value="C:plasma membrane"/>
    <property type="evidence" value="ECO:0007669"/>
    <property type="project" value="UniProtKB-SubCell"/>
</dbReference>
<dbReference type="GO" id="GO:0051537">
    <property type="term" value="F:2 iron, 2 sulfur cluster binding"/>
    <property type="evidence" value="ECO:0007669"/>
    <property type="project" value="UniProtKB-KW"/>
</dbReference>
<dbReference type="GO" id="GO:0009055">
    <property type="term" value="F:electron transfer activity"/>
    <property type="evidence" value="ECO:0007669"/>
    <property type="project" value="UniProtKB-UniRule"/>
</dbReference>
<dbReference type="GO" id="GO:0046872">
    <property type="term" value="F:metal ion binding"/>
    <property type="evidence" value="ECO:0007669"/>
    <property type="project" value="UniProtKB-KW"/>
</dbReference>
<dbReference type="GO" id="GO:0016655">
    <property type="term" value="F:oxidoreductase activity, acting on NAD(P)H, quinone or similar compound as acceptor"/>
    <property type="evidence" value="ECO:0007669"/>
    <property type="project" value="InterPro"/>
</dbReference>
<dbReference type="GO" id="GO:0006814">
    <property type="term" value="P:sodium ion transport"/>
    <property type="evidence" value="ECO:0007669"/>
    <property type="project" value="UniProtKB-UniRule"/>
</dbReference>
<dbReference type="CDD" id="cd00207">
    <property type="entry name" value="fer2"/>
    <property type="match status" value="1"/>
</dbReference>
<dbReference type="CDD" id="cd06188">
    <property type="entry name" value="NADH_quinone_reductase"/>
    <property type="match status" value="1"/>
</dbReference>
<dbReference type="FunFam" id="3.40.50.80:FF:000014">
    <property type="entry name" value="Na(+)-translocating NADH-quinone reductase subunit F"/>
    <property type="match status" value="1"/>
</dbReference>
<dbReference type="Gene3D" id="3.10.20.30">
    <property type="match status" value="1"/>
</dbReference>
<dbReference type="Gene3D" id="3.40.50.80">
    <property type="entry name" value="Nucleotide-binding domain of ferredoxin-NADP reductase (FNR) module"/>
    <property type="match status" value="1"/>
</dbReference>
<dbReference type="Gene3D" id="2.40.30.10">
    <property type="entry name" value="Translation factors"/>
    <property type="match status" value="1"/>
</dbReference>
<dbReference type="HAMAP" id="MF_00430">
    <property type="entry name" value="NqrF"/>
    <property type="match status" value="1"/>
</dbReference>
<dbReference type="InterPro" id="IPR036010">
    <property type="entry name" value="2Fe-2S_ferredoxin-like_sf"/>
</dbReference>
<dbReference type="InterPro" id="IPR001041">
    <property type="entry name" value="2Fe-2S_ferredoxin-type"/>
</dbReference>
<dbReference type="InterPro" id="IPR012675">
    <property type="entry name" value="Beta-grasp_dom_sf"/>
</dbReference>
<dbReference type="InterPro" id="IPR008333">
    <property type="entry name" value="Cbr1-like_FAD-bd_dom"/>
</dbReference>
<dbReference type="InterPro" id="IPR017927">
    <property type="entry name" value="FAD-bd_FR_type"/>
</dbReference>
<dbReference type="InterPro" id="IPR039261">
    <property type="entry name" value="FNR_nucleotide-bd"/>
</dbReference>
<dbReference type="InterPro" id="IPR010205">
    <property type="entry name" value="NqrF"/>
</dbReference>
<dbReference type="InterPro" id="IPR001433">
    <property type="entry name" value="OxRdtase_FAD/NAD-bd"/>
</dbReference>
<dbReference type="InterPro" id="IPR017938">
    <property type="entry name" value="Riboflavin_synthase-like_b-brl"/>
</dbReference>
<dbReference type="NCBIfam" id="TIGR01941">
    <property type="entry name" value="nqrF"/>
    <property type="match status" value="1"/>
</dbReference>
<dbReference type="PANTHER" id="PTHR43644">
    <property type="entry name" value="NA(+)-TRANSLOCATING NADH-QUINONE REDUCTASE SUBUNIT"/>
    <property type="match status" value="1"/>
</dbReference>
<dbReference type="PANTHER" id="PTHR43644:SF1">
    <property type="entry name" value="NAD(P)H-FLAVIN REDUCTASE"/>
    <property type="match status" value="1"/>
</dbReference>
<dbReference type="Pfam" id="PF00970">
    <property type="entry name" value="FAD_binding_6"/>
    <property type="match status" value="1"/>
</dbReference>
<dbReference type="Pfam" id="PF00111">
    <property type="entry name" value="Fer2"/>
    <property type="match status" value="1"/>
</dbReference>
<dbReference type="Pfam" id="PF00175">
    <property type="entry name" value="NAD_binding_1"/>
    <property type="match status" value="1"/>
</dbReference>
<dbReference type="PIRSF" id="PIRSF000044">
    <property type="entry name" value="Cis_Diol_DH_RD"/>
    <property type="match status" value="1"/>
</dbReference>
<dbReference type="SUPFAM" id="SSF54292">
    <property type="entry name" value="2Fe-2S ferredoxin-like"/>
    <property type="match status" value="1"/>
</dbReference>
<dbReference type="SUPFAM" id="SSF52343">
    <property type="entry name" value="Ferredoxin reductase-like, C-terminal NADP-linked domain"/>
    <property type="match status" value="1"/>
</dbReference>
<dbReference type="SUPFAM" id="SSF63380">
    <property type="entry name" value="Riboflavin synthase domain-like"/>
    <property type="match status" value="1"/>
</dbReference>
<dbReference type="PROSITE" id="PS51085">
    <property type="entry name" value="2FE2S_FER_2"/>
    <property type="match status" value="1"/>
</dbReference>
<dbReference type="PROSITE" id="PS51384">
    <property type="entry name" value="FAD_FR"/>
    <property type="match status" value="1"/>
</dbReference>
<reference key="1">
    <citation type="journal article" date="2006" name="Genome Biol.">
        <title>Genomic analysis reveals that Pseudomonas aeruginosa virulence is combinatorial.</title>
        <authorList>
            <person name="Lee D.G."/>
            <person name="Urbach J.M."/>
            <person name="Wu G."/>
            <person name="Liberati N.T."/>
            <person name="Feinbaum R.L."/>
            <person name="Miyata S."/>
            <person name="Diggins L.T."/>
            <person name="He J."/>
            <person name="Saucier M."/>
            <person name="Deziel E."/>
            <person name="Friedman L."/>
            <person name="Li L."/>
            <person name="Grills G."/>
            <person name="Montgomery K."/>
            <person name="Kucherlapati R."/>
            <person name="Rahme L.G."/>
            <person name="Ausubel F.M."/>
        </authorList>
    </citation>
    <scope>NUCLEOTIDE SEQUENCE [LARGE SCALE GENOMIC DNA]</scope>
    <source>
        <strain>UCBPP-PA14</strain>
    </source>
</reference>
<evidence type="ECO:0000255" key="1">
    <source>
        <dbReference type="HAMAP-Rule" id="MF_00430"/>
    </source>
</evidence>
<evidence type="ECO:0007829" key="2">
    <source>
        <dbReference type="PDB" id="7QU5"/>
    </source>
</evidence>
<comment type="function">
    <text evidence="1">NQR complex catalyzes the reduction of ubiquinone-1 to ubiquinol by two successive reactions, coupled with the transport of Na(+) ions from the cytoplasm to the periplasm. The first step is catalyzed by NqrF, which accepts electrons from NADH and reduces ubiquinone-1 to ubisemiquinone by a one-electron transfer pathway.</text>
</comment>
<comment type="catalytic activity">
    <reaction evidence="1">
        <text>a ubiquinone + n Na(+)(in) + NADH + H(+) = a ubiquinol + n Na(+)(out) + NAD(+)</text>
        <dbReference type="Rhea" id="RHEA:47748"/>
        <dbReference type="Rhea" id="RHEA-COMP:9565"/>
        <dbReference type="Rhea" id="RHEA-COMP:9566"/>
        <dbReference type="ChEBI" id="CHEBI:15378"/>
        <dbReference type="ChEBI" id="CHEBI:16389"/>
        <dbReference type="ChEBI" id="CHEBI:17976"/>
        <dbReference type="ChEBI" id="CHEBI:29101"/>
        <dbReference type="ChEBI" id="CHEBI:57540"/>
        <dbReference type="ChEBI" id="CHEBI:57945"/>
        <dbReference type="EC" id="7.2.1.1"/>
    </reaction>
</comment>
<comment type="cofactor">
    <cofactor evidence="1">
        <name>[2Fe-2S] cluster</name>
        <dbReference type="ChEBI" id="CHEBI:190135"/>
    </cofactor>
    <text evidence="1">Binds 1 [2Fe-2S] cluster.</text>
</comment>
<comment type="cofactor">
    <cofactor evidence="1">
        <name>FAD</name>
        <dbReference type="ChEBI" id="CHEBI:57692"/>
    </cofactor>
</comment>
<comment type="subunit">
    <text evidence="1">Composed of six subunits; NqrA, NqrB, NqrC, NqrD, NqrE and NqrF.</text>
</comment>
<comment type="subcellular location">
    <subcellularLocation>
        <location evidence="1">Cell inner membrane</location>
        <topology evidence="1">Single-pass membrane protein</topology>
    </subcellularLocation>
</comment>
<comment type="similarity">
    <text evidence="1">Belongs to the NqrF family.</text>
</comment>
<name>NQRF_PSEAB</name>
<accession>Q02PF8</accession>